<evidence type="ECO:0000255" key="1">
    <source>
        <dbReference type="HAMAP-Rule" id="MF_02068"/>
    </source>
</evidence>
<keyword id="KW-0961">Cell wall biogenesis/degradation</keyword>
<keyword id="KW-0548">Nucleotidyltransferase</keyword>
<keyword id="KW-0777">Teichoic acid biosynthesis</keyword>
<keyword id="KW-0808">Transferase</keyword>
<proteinExistence type="inferred from homology"/>
<accession>Q3K093</accession>
<sequence length="239" mass="26370">MNIGVIFAGGVGRRMNTKGKPKQFLEVHGKPIIVHTIDIFQNTEAIDAVVVVCVSDWLDYMNNLVERFNLTKVKAVVAGGETGQMSIFKGLEAAEQLATDDAVVLIHDGVRPLINEEVINANIQSVKETGSAVTSVRAKETVVLVNDSSKISEVVDRTRSFIAKAPQSFYLSDILSIERDAISKGITDAIDSSTLMGMYNRELTIVEGPYENIKITTPDDFYMFKALYDARENEQIYGM</sequence>
<name>TARI_STRA1</name>
<dbReference type="EC" id="2.7.7.40" evidence="1"/>
<dbReference type="EMBL" id="CP000114">
    <property type="protein sequence ID" value="ABA45338.1"/>
    <property type="molecule type" value="Genomic_DNA"/>
</dbReference>
<dbReference type="SMR" id="Q3K093"/>
<dbReference type="KEGG" id="sak:SAK_1452"/>
<dbReference type="HOGENOM" id="CLU_061281_2_3_9"/>
<dbReference type="UniPathway" id="UPA00790"/>
<dbReference type="GO" id="GO:0005829">
    <property type="term" value="C:cytosol"/>
    <property type="evidence" value="ECO:0007669"/>
    <property type="project" value="TreeGrafter"/>
</dbReference>
<dbReference type="GO" id="GO:0047349">
    <property type="term" value="F:D-ribitol-5-phosphate cytidylyltransferase activity"/>
    <property type="evidence" value="ECO:0007669"/>
    <property type="project" value="UniProtKB-UniRule"/>
</dbReference>
<dbReference type="GO" id="GO:0071555">
    <property type="term" value="P:cell wall organization"/>
    <property type="evidence" value="ECO:0007669"/>
    <property type="project" value="UniProtKB-KW"/>
</dbReference>
<dbReference type="GO" id="GO:0008299">
    <property type="term" value="P:isoprenoid biosynthetic process"/>
    <property type="evidence" value="ECO:0007669"/>
    <property type="project" value="InterPro"/>
</dbReference>
<dbReference type="GO" id="GO:1902012">
    <property type="term" value="P:poly(ribitol phosphate) teichoic acid biosynthetic process"/>
    <property type="evidence" value="ECO:0007669"/>
    <property type="project" value="UniProtKB-UniRule"/>
</dbReference>
<dbReference type="CDD" id="cd02516">
    <property type="entry name" value="CDP-ME_synthetase"/>
    <property type="match status" value="1"/>
</dbReference>
<dbReference type="FunFam" id="3.90.550.10:FF:000003">
    <property type="entry name" value="2-C-methyl-D-erythritol 4-phosphate cytidylyltransferase"/>
    <property type="match status" value="1"/>
</dbReference>
<dbReference type="Gene3D" id="3.90.550.10">
    <property type="entry name" value="Spore Coat Polysaccharide Biosynthesis Protein SpsA, Chain A"/>
    <property type="match status" value="1"/>
</dbReference>
<dbReference type="HAMAP" id="MF_02068">
    <property type="entry name" value="TarI"/>
    <property type="match status" value="1"/>
</dbReference>
<dbReference type="InterPro" id="IPR034683">
    <property type="entry name" value="IspD/TarI"/>
</dbReference>
<dbReference type="InterPro" id="IPR018294">
    <property type="entry name" value="ISPD_synthase_CS"/>
</dbReference>
<dbReference type="InterPro" id="IPR029044">
    <property type="entry name" value="Nucleotide-diphossugar_trans"/>
</dbReference>
<dbReference type="InterPro" id="IPR034709">
    <property type="entry name" value="TarI"/>
</dbReference>
<dbReference type="PANTHER" id="PTHR43015">
    <property type="entry name" value="D-RIBITOL-5-PHOSPHATE CYTIDYLYLTRANSFERASE"/>
    <property type="match status" value="1"/>
</dbReference>
<dbReference type="PANTHER" id="PTHR43015:SF1">
    <property type="entry name" value="D-RIBITOL-5-PHOSPHATE CYTIDYLYLTRANSFERASE"/>
    <property type="match status" value="1"/>
</dbReference>
<dbReference type="Pfam" id="PF01128">
    <property type="entry name" value="IspD"/>
    <property type="match status" value="1"/>
</dbReference>
<dbReference type="SUPFAM" id="SSF53448">
    <property type="entry name" value="Nucleotide-diphospho-sugar transferases"/>
    <property type="match status" value="1"/>
</dbReference>
<dbReference type="PROSITE" id="PS01295">
    <property type="entry name" value="ISPD"/>
    <property type="match status" value="1"/>
</dbReference>
<feature type="chain" id="PRO_0000237827" description="Ribitol-5-phosphate cytidylyltransferase">
    <location>
        <begin position="1"/>
        <end position="239"/>
    </location>
</feature>
<feature type="binding site" evidence="1">
    <location>
        <begin position="7"/>
        <end position="10"/>
    </location>
    <ligand>
        <name>CTP</name>
        <dbReference type="ChEBI" id="CHEBI:37563"/>
    </ligand>
</feature>
<feature type="binding site" evidence="1">
    <location>
        <begin position="80"/>
        <end position="86"/>
    </location>
    <ligand>
        <name>CTP</name>
        <dbReference type="ChEBI" id="CHEBI:37563"/>
    </ligand>
</feature>
<feature type="site" description="Transition state stabilizer" evidence="1">
    <location>
        <position position="14"/>
    </location>
</feature>
<feature type="site" description="Transition state stabilizer" evidence="1">
    <location>
        <position position="22"/>
    </location>
</feature>
<feature type="site" description="Positions ribitol 5-phosphate for the nucleophilic attack" evidence="1">
    <location>
        <position position="157"/>
    </location>
</feature>
<feature type="site" description="Positions ribitol 5-phosphate for the nucleophilic attack" evidence="1">
    <location>
        <position position="214"/>
    </location>
</feature>
<protein>
    <recommendedName>
        <fullName evidence="1">Ribitol-5-phosphate cytidylyltransferase</fullName>
        <ecNumber evidence="1">2.7.7.40</ecNumber>
    </recommendedName>
</protein>
<organism>
    <name type="scientific">Streptococcus agalactiae serotype Ia (strain ATCC 27591 / A909 / CDC SS700)</name>
    <dbReference type="NCBI Taxonomy" id="205921"/>
    <lineage>
        <taxon>Bacteria</taxon>
        <taxon>Bacillati</taxon>
        <taxon>Bacillota</taxon>
        <taxon>Bacilli</taxon>
        <taxon>Lactobacillales</taxon>
        <taxon>Streptococcaceae</taxon>
        <taxon>Streptococcus</taxon>
    </lineage>
</organism>
<reference key="1">
    <citation type="journal article" date="2005" name="Proc. Natl. Acad. Sci. U.S.A.">
        <title>Genome analysis of multiple pathogenic isolates of Streptococcus agalactiae: implications for the microbial 'pan-genome'.</title>
        <authorList>
            <person name="Tettelin H."/>
            <person name="Masignani V."/>
            <person name="Cieslewicz M.J."/>
            <person name="Donati C."/>
            <person name="Medini D."/>
            <person name="Ward N.L."/>
            <person name="Angiuoli S.V."/>
            <person name="Crabtree J."/>
            <person name="Jones A.L."/>
            <person name="Durkin A.S."/>
            <person name="DeBoy R.T."/>
            <person name="Davidsen T.M."/>
            <person name="Mora M."/>
            <person name="Scarselli M."/>
            <person name="Margarit y Ros I."/>
            <person name="Peterson J.D."/>
            <person name="Hauser C.R."/>
            <person name="Sundaram J.P."/>
            <person name="Nelson W.C."/>
            <person name="Madupu R."/>
            <person name="Brinkac L.M."/>
            <person name="Dodson R.J."/>
            <person name="Rosovitz M.J."/>
            <person name="Sullivan S.A."/>
            <person name="Daugherty S.C."/>
            <person name="Haft D.H."/>
            <person name="Selengut J."/>
            <person name="Gwinn M.L."/>
            <person name="Zhou L."/>
            <person name="Zafar N."/>
            <person name="Khouri H."/>
            <person name="Radune D."/>
            <person name="Dimitrov G."/>
            <person name="Watkins K."/>
            <person name="O'Connor K.J."/>
            <person name="Smith S."/>
            <person name="Utterback T.R."/>
            <person name="White O."/>
            <person name="Rubens C.E."/>
            <person name="Grandi G."/>
            <person name="Madoff L.C."/>
            <person name="Kasper D.L."/>
            <person name="Telford J.L."/>
            <person name="Wessels M.R."/>
            <person name="Rappuoli R."/>
            <person name="Fraser C.M."/>
        </authorList>
    </citation>
    <scope>NUCLEOTIDE SEQUENCE [LARGE SCALE GENOMIC DNA]</scope>
    <source>
        <strain>ATCC 27591 / A909 / CDC SS700</strain>
    </source>
</reference>
<comment type="function">
    <text evidence="1">Catalyzes the transfer of the cytidylyl group of CTP to D-ribitol 5-phosphate.</text>
</comment>
<comment type="catalytic activity">
    <reaction evidence="1">
        <text>D-ribitol 5-phosphate + CTP + H(+) = CDP-L-ribitol + diphosphate</text>
        <dbReference type="Rhea" id="RHEA:12456"/>
        <dbReference type="ChEBI" id="CHEBI:15378"/>
        <dbReference type="ChEBI" id="CHEBI:33019"/>
        <dbReference type="ChEBI" id="CHEBI:37563"/>
        <dbReference type="ChEBI" id="CHEBI:57608"/>
        <dbReference type="ChEBI" id="CHEBI:57695"/>
        <dbReference type="EC" id="2.7.7.40"/>
    </reaction>
</comment>
<comment type="pathway">
    <text evidence="1">Cell wall biogenesis; poly(ribitol phosphate) teichoic acid biosynthesis.</text>
</comment>
<comment type="similarity">
    <text evidence="1">Belongs to the IspD/TarI cytidylyltransferase family. TarI subfamily.</text>
</comment>
<gene>
    <name evidence="1" type="primary">tarI</name>
    <name type="ordered locus">SAK_1452</name>
</gene>